<accession>P60224</accession>
<accession>Q99TZ6</accession>
<organism>
    <name type="scientific">Staphylococcus aureus (strain N315)</name>
    <dbReference type="NCBI Taxonomy" id="158879"/>
    <lineage>
        <taxon>Bacteria</taxon>
        <taxon>Bacillati</taxon>
        <taxon>Bacillota</taxon>
        <taxon>Bacilli</taxon>
        <taxon>Bacillales</taxon>
        <taxon>Staphylococcaceae</taxon>
        <taxon>Staphylococcus</taxon>
    </lineage>
</organism>
<feature type="chain" id="PRO_0000211102" description="Segregation and condensation protein A">
    <location>
        <begin position="1"/>
        <end position="243"/>
    </location>
</feature>
<gene>
    <name evidence="1" type="primary">scpA</name>
    <name type="ordered locus">SA1326</name>
</gene>
<keyword id="KW-0131">Cell cycle</keyword>
<keyword id="KW-0132">Cell division</keyword>
<keyword id="KW-0159">Chromosome partition</keyword>
<keyword id="KW-0963">Cytoplasm</keyword>
<protein>
    <recommendedName>
        <fullName evidence="1">Segregation and condensation protein A</fullName>
    </recommendedName>
</protein>
<sequence length="243" mass="28671">MYEVKLDAFNGPLDLLLHLIQKFEIDIYDIPMQALTEQYMQYVHAMKQLEINIASEYLVLASELLMIKSKMLLPQSTSDMDVDDDPREDLVGRLIEYQNYKEYTAILNDMKEERDFYFTKRPTDLSHLETDESWDPNHTIDLTELIVAYQRVKNRVELNTPKSVEIRKETFTIQQATEQVTSRLKDKDHFNFFSLFTFSEPIEQVVTHFLAILEMSKAGIINIEQQRNFEDINIIRGVNYHFG</sequence>
<reference key="1">
    <citation type="journal article" date="2001" name="Lancet">
        <title>Whole genome sequencing of meticillin-resistant Staphylococcus aureus.</title>
        <authorList>
            <person name="Kuroda M."/>
            <person name="Ohta T."/>
            <person name="Uchiyama I."/>
            <person name="Baba T."/>
            <person name="Yuzawa H."/>
            <person name="Kobayashi I."/>
            <person name="Cui L."/>
            <person name="Oguchi A."/>
            <person name="Aoki K."/>
            <person name="Nagai Y."/>
            <person name="Lian J.-Q."/>
            <person name="Ito T."/>
            <person name="Kanamori M."/>
            <person name="Matsumaru H."/>
            <person name="Maruyama A."/>
            <person name="Murakami H."/>
            <person name="Hosoyama A."/>
            <person name="Mizutani-Ui Y."/>
            <person name="Takahashi N.K."/>
            <person name="Sawano T."/>
            <person name="Inoue R."/>
            <person name="Kaito C."/>
            <person name="Sekimizu K."/>
            <person name="Hirakawa H."/>
            <person name="Kuhara S."/>
            <person name="Goto S."/>
            <person name="Yabuzaki J."/>
            <person name="Kanehisa M."/>
            <person name="Yamashita A."/>
            <person name="Oshima K."/>
            <person name="Furuya K."/>
            <person name="Yoshino C."/>
            <person name="Shiba T."/>
            <person name="Hattori M."/>
            <person name="Ogasawara N."/>
            <person name="Hayashi H."/>
            <person name="Hiramatsu K."/>
        </authorList>
    </citation>
    <scope>NUCLEOTIDE SEQUENCE [LARGE SCALE GENOMIC DNA]</scope>
    <source>
        <strain>N315</strain>
    </source>
</reference>
<comment type="function">
    <text evidence="1">Participates in chromosomal partition during cell division. May act via the formation of a condensin-like complex containing Smc and ScpB that pull DNA away from mid-cell into both cell halves.</text>
</comment>
<comment type="subunit">
    <text evidence="1">Component of a cohesin-like complex composed of ScpA, ScpB and the Smc homodimer, in which ScpA and ScpB bind to the head domain of Smc. The presence of the three proteins is required for the association of the complex with DNA.</text>
</comment>
<comment type="subcellular location">
    <subcellularLocation>
        <location evidence="1">Cytoplasm</location>
    </subcellularLocation>
    <text evidence="1">Associated with two foci at the outer edges of the nucleoid region in young cells, and at four foci within both cell halves in older cells.</text>
</comment>
<comment type="similarity">
    <text evidence="1">Belongs to the ScpA family.</text>
</comment>
<comment type="sequence caution" evidence="2">
    <conflict type="erroneous initiation">
        <sequence resource="EMBL-CDS" id="BAB42588"/>
    </conflict>
</comment>
<proteinExistence type="inferred from homology"/>
<dbReference type="EMBL" id="BA000018">
    <property type="protein sequence ID" value="BAB42588.1"/>
    <property type="status" value="ALT_INIT"/>
    <property type="molecule type" value="Genomic_DNA"/>
</dbReference>
<dbReference type="PIR" id="G89928">
    <property type="entry name" value="G89928"/>
</dbReference>
<dbReference type="RefSeq" id="WP_000273371.1">
    <property type="nucleotide sequence ID" value="NC_002745.2"/>
</dbReference>
<dbReference type="SMR" id="P60224"/>
<dbReference type="EnsemblBacteria" id="BAB42588">
    <property type="protein sequence ID" value="BAB42588"/>
    <property type="gene ID" value="BAB42588"/>
</dbReference>
<dbReference type="KEGG" id="sau:SA1326"/>
<dbReference type="HOGENOM" id="CLU_038686_3_1_9"/>
<dbReference type="GO" id="GO:0005737">
    <property type="term" value="C:cytoplasm"/>
    <property type="evidence" value="ECO:0007669"/>
    <property type="project" value="UniProtKB-SubCell"/>
</dbReference>
<dbReference type="GO" id="GO:0051301">
    <property type="term" value="P:cell division"/>
    <property type="evidence" value="ECO:0007669"/>
    <property type="project" value="UniProtKB-KW"/>
</dbReference>
<dbReference type="GO" id="GO:0007059">
    <property type="term" value="P:chromosome segregation"/>
    <property type="evidence" value="ECO:0007669"/>
    <property type="project" value="UniProtKB-UniRule"/>
</dbReference>
<dbReference type="GO" id="GO:0006260">
    <property type="term" value="P:DNA replication"/>
    <property type="evidence" value="ECO:0007669"/>
    <property type="project" value="UniProtKB-UniRule"/>
</dbReference>
<dbReference type="Gene3D" id="6.10.250.2410">
    <property type="match status" value="1"/>
</dbReference>
<dbReference type="Gene3D" id="1.10.10.580">
    <property type="entry name" value="Structural maintenance of chromosome 1. Chain E"/>
    <property type="match status" value="1"/>
</dbReference>
<dbReference type="HAMAP" id="MF_01805">
    <property type="entry name" value="ScpA"/>
    <property type="match status" value="1"/>
</dbReference>
<dbReference type="InterPro" id="IPR003768">
    <property type="entry name" value="ScpA"/>
</dbReference>
<dbReference type="InterPro" id="IPR023093">
    <property type="entry name" value="ScpA-like_C"/>
</dbReference>
<dbReference type="PANTHER" id="PTHR33969">
    <property type="entry name" value="SEGREGATION AND CONDENSATION PROTEIN A"/>
    <property type="match status" value="1"/>
</dbReference>
<dbReference type="PANTHER" id="PTHR33969:SF2">
    <property type="entry name" value="SEGREGATION AND CONDENSATION PROTEIN A"/>
    <property type="match status" value="1"/>
</dbReference>
<dbReference type="Pfam" id="PF02616">
    <property type="entry name" value="SMC_ScpA"/>
    <property type="match status" value="1"/>
</dbReference>
<name>SCPA_STAAN</name>
<evidence type="ECO:0000255" key="1">
    <source>
        <dbReference type="HAMAP-Rule" id="MF_01805"/>
    </source>
</evidence>
<evidence type="ECO:0000305" key="2"/>